<proteinExistence type="inferred from homology"/>
<reference key="1">
    <citation type="journal article" date="2007" name="J. Bacteriol.">
        <title>Complete genome sequence of Haemophilus somnus (Histophilus somni) strain 129Pt and comparison to Haemophilus ducreyi 35000HP and Haemophilus influenzae Rd.</title>
        <authorList>
            <person name="Challacombe J.F."/>
            <person name="Duncan A.J."/>
            <person name="Brettin T.S."/>
            <person name="Bruce D."/>
            <person name="Chertkov O."/>
            <person name="Detter J.C."/>
            <person name="Han C.S."/>
            <person name="Misra M."/>
            <person name="Richardson P."/>
            <person name="Tapia R."/>
            <person name="Thayer N."/>
            <person name="Xie G."/>
            <person name="Inzana T.J."/>
        </authorList>
    </citation>
    <scope>NUCLEOTIDE SEQUENCE [LARGE SCALE GENOMIC DNA]</scope>
    <source>
        <strain>129Pt</strain>
    </source>
</reference>
<gene>
    <name evidence="1" type="primary">dsbB</name>
    <name type="ordered locus">HS_0624</name>
</gene>
<sequence>MLIFFKNLSMKRSTWILLFISALVLESTALYFQHGMGLNPCVMCIYERVAILGILFSGLIGCIAPKWLVLRILALLIGLGSAVKGLLLAIKHLDYQINVYPWNQCAMVPDFPQTLPLDKWFPNIFMPSGSCSDITWSFLGFSMVQWIIVIFACYFLFFIILSISQFKKVRKNRMLFR</sequence>
<name>DSBB_HISS1</name>
<comment type="function">
    <text evidence="1">Required for disulfide bond formation in some periplasmic proteins. Acts by oxidizing the DsbA protein.</text>
</comment>
<comment type="subcellular location">
    <subcellularLocation>
        <location evidence="1">Cell inner membrane</location>
        <topology evidence="1">Multi-pass membrane protein</topology>
    </subcellularLocation>
</comment>
<comment type="similarity">
    <text evidence="1">Belongs to the DsbB family.</text>
</comment>
<comment type="sequence caution" evidence="2">
    <conflict type="erroneous initiation">
        <sequence resource="EMBL-CDS" id="ABI24901"/>
    </conflict>
</comment>
<evidence type="ECO:0000255" key="1">
    <source>
        <dbReference type="HAMAP-Rule" id="MF_00286"/>
    </source>
</evidence>
<evidence type="ECO:0000305" key="2"/>
<dbReference type="EMBL" id="CP000436">
    <property type="protein sequence ID" value="ABI24901.1"/>
    <property type="status" value="ALT_INIT"/>
    <property type="molecule type" value="Genomic_DNA"/>
</dbReference>
<dbReference type="SMR" id="Q0I309"/>
<dbReference type="KEGG" id="hso:HS_0624"/>
<dbReference type="eggNOG" id="COG1495">
    <property type="taxonomic scope" value="Bacteria"/>
</dbReference>
<dbReference type="HOGENOM" id="CLU_098660_2_0_6"/>
<dbReference type="GO" id="GO:0005886">
    <property type="term" value="C:plasma membrane"/>
    <property type="evidence" value="ECO:0007669"/>
    <property type="project" value="UniProtKB-SubCell"/>
</dbReference>
<dbReference type="GO" id="GO:0009055">
    <property type="term" value="F:electron transfer activity"/>
    <property type="evidence" value="ECO:0007669"/>
    <property type="project" value="UniProtKB-UniRule"/>
</dbReference>
<dbReference type="GO" id="GO:0015035">
    <property type="term" value="F:protein-disulfide reductase activity"/>
    <property type="evidence" value="ECO:0007669"/>
    <property type="project" value="UniProtKB-UniRule"/>
</dbReference>
<dbReference type="GO" id="GO:0006457">
    <property type="term" value="P:protein folding"/>
    <property type="evidence" value="ECO:0007669"/>
    <property type="project" value="InterPro"/>
</dbReference>
<dbReference type="Gene3D" id="1.20.1550.10">
    <property type="entry name" value="DsbB-like"/>
    <property type="match status" value="1"/>
</dbReference>
<dbReference type="HAMAP" id="MF_00286">
    <property type="entry name" value="DsbB"/>
    <property type="match status" value="1"/>
</dbReference>
<dbReference type="InterPro" id="IPR003752">
    <property type="entry name" value="DiS_bond_form_DsbB/BdbC"/>
</dbReference>
<dbReference type="InterPro" id="IPR022920">
    <property type="entry name" value="Disulphide_bond_form_DsbB"/>
</dbReference>
<dbReference type="InterPro" id="IPR050183">
    <property type="entry name" value="DsbB"/>
</dbReference>
<dbReference type="InterPro" id="IPR023380">
    <property type="entry name" value="DsbB-like_sf"/>
</dbReference>
<dbReference type="NCBIfam" id="NF002485">
    <property type="entry name" value="PRK01749.1"/>
    <property type="match status" value="1"/>
</dbReference>
<dbReference type="PANTHER" id="PTHR36570">
    <property type="entry name" value="DISULFIDE BOND FORMATION PROTEIN B"/>
    <property type="match status" value="1"/>
</dbReference>
<dbReference type="PANTHER" id="PTHR36570:SF2">
    <property type="entry name" value="DISULFIDE BOND FORMATION PROTEIN B"/>
    <property type="match status" value="1"/>
</dbReference>
<dbReference type="Pfam" id="PF02600">
    <property type="entry name" value="DsbB"/>
    <property type="match status" value="1"/>
</dbReference>
<dbReference type="SUPFAM" id="SSF158442">
    <property type="entry name" value="DsbB-like"/>
    <property type="match status" value="1"/>
</dbReference>
<keyword id="KW-0997">Cell inner membrane</keyword>
<keyword id="KW-1003">Cell membrane</keyword>
<keyword id="KW-0143">Chaperone</keyword>
<keyword id="KW-1015">Disulfide bond</keyword>
<keyword id="KW-0249">Electron transport</keyword>
<keyword id="KW-0472">Membrane</keyword>
<keyword id="KW-0560">Oxidoreductase</keyword>
<keyword id="KW-0676">Redox-active center</keyword>
<keyword id="KW-0812">Transmembrane</keyword>
<keyword id="KW-1133">Transmembrane helix</keyword>
<keyword id="KW-0813">Transport</keyword>
<accession>Q0I309</accession>
<feature type="chain" id="PRO_0000298361" description="Disulfide bond formation protein B">
    <location>
        <begin position="1"/>
        <end position="177"/>
    </location>
</feature>
<feature type="topological domain" description="Cytoplasmic" evidence="1">
    <location>
        <begin position="1"/>
        <end position="14"/>
    </location>
</feature>
<feature type="transmembrane region" description="Helical" evidence="1">
    <location>
        <begin position="15"/>
        <end position="31"/>
    </location>
</feature>
<feature type="topological domain" description="Periplasmic" evidence="1">
    <location>
        <begin position="32"/>
        <end position="49"/>
    </location>
</feature>
<feature type="transmembrane region" description="Helical" evidence="1">
    <location>
        <begin position="50"/>
        <end position="65"/>
    </location>
</feature>
<feature type="topological domain" description="Cytoplasmic" evidence="1">
    <location>
        <begin position="66"/>
        <end position="72"/>
    </location>
</feature>
<feature type="transmembrane region" description="Helical" evidence="1">
    <location>
        <begin position="73"/>
        <end position="90"/>
    </location>
</feature>
<feature type="topological domain" description="Periplasmic" evidence="1">
    <location>
        <begin position="91"/>
        <end position="145"/>
    </location>
</feature>
<feature type="transmembrane region" description="Helical" evidence="1">
    <location>
        <begin position="146"/>
        <end position="164"/>
    </location>
</feature>
<feature type="topological domain" description="Cytoplasmic" evidence="1">
    <location>
        <begin position="165"/>
        <end position="177"/>
    </location>
</feature>
<feature type="disulfide bond" description="Redox-active" evidence="1">
    <location>
        <begin position="41"/>
        <end position="44"/>
    </location>
</feature>
<feature type="disulfide bond" description="Redox-active" evidence="1">
    <location>
        <begin position="105"/>
        <end position="131"/>
    </location>
</feature>
<protein>
    <recommendedName>
        <fullName evidence="1">Disulfide bond formation protein B</fullName>
    </recommendedName>
    <alternativeName>
        <fullName evidence="1">Disulfide oxidoreductase</fullName>
    </alternativeName>
</protein>
<organism>
    <name type="scientific">Histophilus somni (strain 129Pt)</name>
    <name type="common">Haemophilus somnus</name>
    <dbReference type="NCBI Taxonomy" id="205914"/>
    <lineage>
        <taxon>Bacteria</taxon>
        <taxon>Pseudomonadati</taxon>
        <taxon>Pseudomonadota</taxon>
        <taxon>Gammaproteobacteria</taxon>
        <taxon>Pasteurellales</taxon>
        <taxon>Pasteurellaceae</taxon>
        <taxon>Histophilus</taxon>
    </lineage>
</organism>